<proteinExistence type="inferred from homology"/>
<name>PFDA_PYRCJ</name>
<sequence length="134" mass="15095">MSLSRQDIQRLLEEYQLLNDLLASLQAQHATVSELVEELSTALDGVRLLKSEGGERLVHIGAGIFVGGVFEGREVLTPLGAGYYAFLDLENAERIVKERLEEYSKVKTSLEENIEKLTERALQIRQVLERLGLR</sequence>
<dbReference type="EMBL" id="CP000561">
    <property type="protein sequence ID" value="ABO09245.1"/>
    <property type="molecule type" value="Genomic_DNA"/>
</dbReference>
<dbReference type="RefSeq" id="WP_011850503.1">
    <property type="nucleotide sequence ID" value="NC_009073.1"/>
</dbReference>
<dbReference type="SMR" id="A3MX78"/>
<dbReference type="STRING" id="410359.Pcal_1828"/>
<dbReference type="GeneID" id="4909599"/>
<dbReference type="KEGG" id="pcl:Pcal_1828"/>
<dbReference type="eggNOG" id="arCOG01341">
    <property type="taxonomic scope" value="Archaea"/>
</dbReference>
<dbReference type="HOGENOM" id="CLU_1912415_0_0_2"/>
<dbReference type="OrthoDB" id="27425at2157"/>
<dbReference type="Proteomes" id="UP000001431">
    <property type="component" value="Chromosome"/>
</dbReference>
<dbReference type="GO" id="GO:0005737">
    <property type="term" value="C:cytoplasm"/>
    <property type="evidence" value="ECO:0007669"/>
    <property type="project" value="UniProtKB-SubCell"/>
</dbReference>
<dbReference type="GO" id="GO:0016272">
    <property type="term" value="C:prefoldin complex"/>
    <property type="evidence" value="ECO:0007669"/>
    <property type="project" value="UniProtKB-UniRule"/>
</dbReference>
<dbReference type="GO" id="GO:0051082">
    <property type="term" value="F:unfolded protein binding"/>
    <property type="evidence" value="ECO:0007669"/>
    <property type="project" value="UniProtKB-UniRule"/>
</dbReference>
<dbReference type="GO" id="GO:0006457">
    <property type="term" value="P:protein folding"/>
    <property type="evidence" value="ECO:0007669"/>
    <property type="project" value="UniProtKB-UniRule"/>
</dbReference>
<dbReference type="CDD" id="cd23160">
    <property type="entry name" value="Prefoldin_alpha_GimC"/>
    <property type="match status" value="1"/>
</dbReference>
<dbReference type="Gene3D" id="1.10.287.370">
    <property type="match status" value="1"/>
</dbReference>
<dbReference type="HAMAP" id="MF_00308">
    <property type="entry name" value="PfdA"/>
    <property type="match status" value="1"/>
</dbReference>
<dbReference type="InterPro" id="IPR011599">
    <property type="entry name" value="PFD_alpha_archaea"/>
</dbReference>
<dbReference type="InterPro" id="IPR009053">
    <property type="entry name" value="Prefoldin"/>
</dbReference>
<dbReference type="InterPro" id="IPR004127">
    <property type="entry name" value="Prefoldin_subunit_alpha"/>
</dbReference>
<dbReference type="NCBIfam" id="TIGR00293">
    <property type="entry name" value="prefoldin subunit alpha"/>
    <property type="match status" value="1"/>
</dbReference>
<dbReference type="Pfam" id="PF02996">
    <property type="entry name" value="Prefoldin"/>
    <property type="match status" value="1"/>
</dbReference>
<dbReference type="SUPFAM" id="SSF46579">
    <property type="entry name" value="Prefoldin"/>
    <property type="match status" value="1"/>
</dbReference>
<feature type="chain" id="PRO_0000300770" description="Prefoldin subunit alpha">
    <location>
        <begin position="1"/>
        <end position="134"/>
    </location>
</feature>
<organism>
    <name type="scientific">Pyrobaculum calidifontis (strain DSM 21063 / JCM 11548 / VA1)</name>
    <dbReference type="NCBI Taxonomy" id="410359"/>
    <lineage>
        <taxon>Archaea</taxon>
        <taxon>Thermoproteota</taxon>
        <taxon>Thermoprotei</taxon>
        <taxon>Thermoproteales</taxon>
        <taxon>Thermoproteaceae</taxon>
        <taxon>Pyrobaculum</taxon>
    </lineage>
</organism>
<reference key="1">
    <citation type="submission" date="2007-02" db="EMBL/GenBank/DDBJ databases">
        <title>Complete sequence of Pyrobaculum calidifontis JCM 11548.</title>
        <authorList>
            <consortium name="US DOE Joint Genome Institute"/>
            <person name="Copeland A."/>
            <person name="Lucas S."/>
            <person name="Lapidus A."/>
            <person name="Barry K."/>
            <person name="Glavina del Rio T."/>
            <person name="Dalin E."/>
            <person name="Tice H."/>
            <person name="Pitluck S."/>
            <person name="Chain P."/>
            <person name="Malfatti S."/>
            <person name="Shin M."/>
            <person name="Vergez L."/>
            <person name="Schmutz J."/>
            <person name="Larimer F."/>
            <person name="Land M."/>
            <person name="Hauser L."/>
            <person name="Kyrpides N."/>
            <person name="Mikhailova N."/>
            <person name="Cozen A.E."/>
            <person name="Fitz-Gibbon S.T."/>
            <person name="House C.H."/>
            <person name="Saltikov C."/>
            <person name="Lowe T.M."/>
            <person name="Richardson P."/>
        </authorList>
    </citation>
    <scope>NUCLEOTIDE SEQUENCE [LARGE SCALE GENOMIC DNA]</scope>
    <source>
        <strain>DSM 21063 / JCM 11548 / VA1</strain>
    </source>
</reference>
<comment type="function">
    <text evidence="1">Molecular chaperone capable of stabilizing a range of proteins. Seems to fulfill an ATP-independent, HSP70-like function in archaeal de novo protein folding.</text>
</comment>
<comment type="subunit">
    <text evidence="1">Heterohexamer of two alpha and four beta subunits.</text>
</comment>
<comment type="subcellular location">
    <subcellularLocation>
        <location evidence="1">Cytoplasm</location>
    </subcellularLocation>
</comment>
<comment type="similarity">
    <text evidence="2">Belongs to the prefoldin subunit alpha family.</text>
</comment>
<evidence type="ECO:0000255" key="1">
    <source>
        <dbReference type="HAMAP-Rule" id="MF_00308"/>
    </source>
</evidence>
<evidence type="ECO:0000305" key="2"/>
<gene>
    <name evidence="1" type="primary">pfdA</name>
    <name type="ordered locus">Pcal_1828</name>
</gene>
<protein>
    <recommendedName>
        <fullName evidence="1">Prefoldin subunit alpha</fullName>
    </recommendedName>
    <alternativeName>
        <fullName evidence="1">GimC subunit alpha</fullName>
    </alternativeName>
</protein>
<accession>A3MX78</accession>
<keyword id="KW-0143">Chaperone</keyword>
<keyword id="KW-0963">Cytoplasm</keyword>